<name>ARC_BIFLS</name>
<organism>
    <name type="scientific">Bifidobacterium longum subsp. infantis (strain ATCC 15697 / DSM 20088 / JCM 1222 / NCTC 11817 / S12)</name>
    <dbReference type="NCBI Taxonomy" id="391904"/>
    <lineage>
        <taxon>Bacteria</taxon>
        <taxon>Bacillati</taxon>
        <taxon>Actinomycetota</taxon>
        <taxon>Actinomycetes</taxon>
        <taxon>Bifidobacteriales</taxon>
        <taxon>Bifidobacteriaceae</taxon>
        <taxon>Bifidobacterium</taxon>
    </lineage>
</organism>
<dbReference type="EMBL" id="CP001095">
    <property type="protein sequence ID" value="ACJ53189.1"/>
    <property type="molecule type" value="Genomic_DNA"/>
</dbReference>
<dbReference type="EMBL" id="AP010889">
    <property type="protein sequence ID" value="BAJ69782.1"/>
    <property type="molecule type" value="Genomic_DNA"/>
</dbReference>
<dbReference type="SMR" id="B7GUP3"/>
<dbReference type="KEGG" id="bln:Blon_2128"/>
<dbReference type="KEGG" id="blon:BLIJ_2205"/>
<dbReference type="PATRIC" id="fig|391904.8.peg.2207"/>
<dbReference type="HOGENOM" id="CLU_036054_0_0_11"/>
<dbReference type="BRENDA" id="5.6.1.5">
    <property type="organism ID" value="849"/>
</dbReference>
<dbReference type="Proteomes" id="UP000001360">
    <property type="component" value="Chromosome"/>
</dbReference>
<dbReference type="GO" id="GO:0000502">
    <property type="term" value="C:proteasome complex"/>
    <property type="evidence" value="ECO:0007669"/>
    <property type="project" value="InterPro"/>
</dbReference>
<dbReference type="GO" id="GO:0005524">
    <property type="term" value="F:ATP binding"/>
    <property type="evidence" value="ECO:0007669"/>
    <property type="project" value="UniProtKB-UniRule"/>
</dbReference>
<dbReference type="GO" id="GO:0016887">
    <property type="term" value="F:ATP hydrolysis activity"/>
    <property type="evidence" value="ECO:0007669"/>
    <property type="project" value="UniProtKB-UniRule"/>
</dbReference>
<dbReference type="GO" id="GO:0019941">
    <property type="term" value="P:modification-dependent protein catabolic process"/>
    <property type="evidence" value="ECO:0007669"/>
    <property type="project" value="InterPro"/>
</dbReference>
<dbReference type="GO" id="GO:0010498">
    <property type="term" value="P:proteasomal protein catabolic process"/>
    <property type="evidence" value="ECO:0007669"/>
    <property type="project" value="InterPro"/>
</dbReference>
<dbReference type="FunFam" id="3.40.50.300:FF:001025">
    <property type="entry name" value="ATPase family, AAA domain-containing 2B"/>
    <property type="match status" value="1"/>
</dbReference>
<dbReference type="Gene3D" id="1.10.8.60">
    <property type="match status" value="1"/>
</dbReference>
<dbReference type="Gene3D" id="2.40.50.140">
    <property type="entry name" value="Nucleic acid-binding proteins"/>
    <property type="match status" value="2"/>
</dbReference>
<dbReference type="Gene3D" id="3.40.50.300">
    <property type="entry name" value="P-loop containing nucleotide triphosphate hydrolases"/>
    <property type="match status" value="1"/>
</dbReference>
<dbReference type="HAMAP" id="MF_02112">
    <property type="entry name" value="ARC_ATPase"/>
    <property type="match status" value="1"/>
</dbReference>
<dbReference type="InterPro" id="IPR003593">
    <property type="entry name" value="AAA+_ATPase"/>
</dbReference>
<dbReference type="InterPro" id="IPR050168">
    <property type="entry name" value="AAA_ATPase_domain"/>
</dbReference>
<dbReference type="InterPro" id="IPR003959">
    <property type="entry name" value="ATPase_AAA_core"/>
</dbReference>
<dbReference type="InterPro" id="IPR003960">
    <property type="entry name" value="ATPase_AAA_CS"/>
</dbReference>
<dbReference type="InterPro" id="IPR012340">
    <property type="entry name" value="NA-bd_OB-fold"/>
</dbReference>
<dbReference type="InterPro" id="IPR027417">
    <property type="entry name" value="P-loop_NTPase"/>
</dbReference>
<dbReference type="InterPro" id="IPR032501">
    <property type="entry name" value="Prot_ATP_ID_OB_2nd"/>
</dbReference>
<dbReference type="InterPro" id="IPR041626">
    <property type="entry name" value="Prot_ATP_ID_OB_N"/>
</dbReference>
<dbReference type="InterPro" id="IPR022482">
    <property type="entry name" value="Proteasome_ATPase"/>
</dbReference>
<dbReference type="NCBIfam" id="TIGR03689">
    <property type="entry name" value="pup_AAA"/>
    <property type="match status" value="1"/>
</dbReference>
<dbReference type="PANTHER" id="PTHR23077">
    <property type="entry name" value="AAA-FAMILY ATPASE"/>
    <property type="match status" value="1"/>
</dbReference>
<dbReference type="PANTHER" id="PTHR23077:SF144">
    <property type="entry name" value="PROTEASOME-ASSOCIATED ATPASE"/>
    <property type="match status" value="1"/>
</dbReference>
<dbReference type="Pfam" id="PF00004">
    <property type="entry name" value="AAA"/>
    <property type="match status" value="1"/>
</dbReference>
<dbReference type="Pfam" id="PF16450">
    <property type="entry name" value="Prot_ATP_ID_OB_C"/>
    <property type="match status" value="1"/>
</dbReference>
<dbReference type="Pfam" id="PF17758">
    <property type="entry name" value="Prot_ATP_ID_OB_N"/>
    <property type="match status" value="1"/>
</dbReference>
<dbReference type="SMART" id="SM00382">
    <property type="entry name" value="AAA"/>
    <property type="match status" value="1"/>
</dbReference>
<dbReference type="SUPFAM" id="SSF52540">
    <property type="entry name" value="P-loop containing nucleoside triphosphate hydrolases"/>
    <property type="match status" value="1"/>
</dbReference>
<dbReference type="PROSITE" id="PS00674">
    <property type="entry name" value="AAA"/>
    <property type="match status" value="1"/>
</dbReference>
<feature type="chain" id="PRO_0000396971" description="AAA ATPase forming ring-shaped complexes">
    <location>
        <begin position="1"/>
        <end position="521"/>
    </location>
</feature>
<feature type="coiled-coil region" evidence="1">
    <location>
        <begin position="4"/>
        <end position="44"/>
    </location>
</feature>
<feature type="binding site" evidence="1">
    <location>
        <begin position="235"/>
        <end position="240"/>
    </location>
    <ligand>
        <name>ATP</name>
        <dbReference type="ChEBI" id="CHEBI:30616"/>
    </ligand>
</feature>
<keyword id="KW-0067">ATP-binding</keyword>
<keyword id="KW-0175">Coiled coil</keyword>
<keyword id="KW-0547">Nucleotide-binding</keyword>
<accession>B7GUP3</accession>
<accession>E8MMK5</accession>
<reference key="1">
    <citation type="journal article" date="2008" name="Proc. Natl. Acad. Sci. U.S.A.">
        <title>The genome sequence of Bifidobacterium longum subsp. infantis reveals adaptations for milk utilization within the infant microbiome.</title>
        <authorList>
            <person name="Sela D.A."/>
            <person name="Chapman J."/>
            <person name="Adeuya A."/>
            <person name="Kim J.H."/>
            <person name="Chen F."/>
            <person name="Whitehead T.R."/>
            <person name="Lapidus A."/>
            <person name="Rokhsar D.S."/>
            <person name="Lebrilla C.B."/>
            <person name="German J.B."/>
            <person name="Price N.P."/>
            <person name="Richardson P.M."/>
            <person name="Mills D.A."/>
        </authorList>
    </citation>
    <scope>NUCLEOTIDE SEQUENCE [LARGE SCALE GENOMIC DNA]</scope>
    <source>
        <strain>ATCC 15697 / DSM 20088 / JCM 1222 / NCTC 11817 / S12</strain>
    </source>
</reference>
<reference key="2">
    <citation type="journal article" date="2011" name="Nature">
        <title>Bifidobacteria can protect from enteropathogenic infection through production of acetate.</title>
        <authorList>
            <person name="Fukuda S."/>
            <person name="Toh H."/>
            <person name="Hase K."/>
            <person name="Oshima K."/>
            <person name="Nakanishi Y."/>
            <person name="Yoshimura K."/>
            <person name="Tobe T."/>
            <person name="Clarke J.M."/>
            <person name="Topping D.L."/>
            <person name="Suzuki T."/>
            <person name="Taylor T.D."/>
            <person name="Itoh K."/>
            <person name="Kikuchi J."/>
            <person name="Morita H."/>
            <person name="Hattori M."/>
            <person name="Ohno H."/>
        </authorList>
    </citation>
    <scope>NUCLEOTIDE SEQUENCE [LARGE SCALE GENOMIC DNA]</scope>
    <source>
        <strain>ATCC 15697 / DSM 20088 / JCM 1222 / NCTC 11817 / S12</strain>
    </source>
</reference>
<comment type="subunit">
    <text evidence="1">Homohexamer. Assembles into a hexameric ring structure.</text>
</comment>
<comment type="similarity">
    <text evidence="1">Belongs to the AAA ATPase family.</text>
</comment>
<proteinExistence type="inferred from homology"/>
<sequence length="521" mass="56539">MSDTEDLAALNDRLMAKNHALAEALNRAGKELTKAKSRLAQLAQPPLTFATMVKVDSTRTDADGIQHASAEVISGTRRMVVPVASNVNAARLTAGATVMLNEKLVLVEQRDADTVGQIRSVKQVLDDGRLIVTDASGNPVLIRRSGALAYADINQGDRIIVDPSVRLAIEALPAEGDKDLVLEETPDVTFADIGGLDSEIGRIRDAVQLPFRHRALFERYDLKPPKGVLLYGPPGNGKTMIAKAVANALCEGGYDSNGDGSISPAETRVKGVFLSVKGPELLNKYVGESERLIRLIFQRARERAADGNPVVVFIDEMDSLLRTRGSGVSSDVETTIVPQFLSELDGVESLDNVMVIGASNRVDMIDPAVLRPGRLDVKIRVGRPKTNQAIAIVDHYLTDDLPLENGVDAHALSAVLVHDIYGTSERRHLCDVQEENGQWHALFLADVVSGAMLKNIVDRAKTRAVKESIETGSDVALTVPLLAAAVEDEYRETRDSMADVDPEQWSRINGMDPIRRIRTAE</sequence>
<gene>
    <name evidence="1" type="primary">arc</name>
    <name type="ordered locus">Blon_2128</name>
    <name type="ordered locus">BLIJ_2205</name>
</gene>
<protein>
    <recommendedName>
        <fullName evidence="1">AAA ATPase forming ring-shaped complexes</fullName>
        <shortName evidence="1">ARC</shortName>
    </recommendedName>
</protein>
<evidence type="ECO:0000255" key="1">
    <source>
        <dbReference type="HAMAP-Rule" id="MF_02112"/>
    </source>
</evidence>